<keyword id="KW-0028">Amino-acid biosynthesis</keyword>
<keyword id="KW-0057">Aromatic amino acid biosynthesis</keyword>
<keyword id="KW-0170">Cobalt</keyword>
<keyword id="KW-0963">Cytoplasm</keyword>
<keyword id="KW-0456">Lyase</keyword>
<keyword id="KW-0479">Metal-binding</keyword>
<keyword id="KW-0520">NAD</keyword>
<keyword id="KW-0547">Nucleotide-binding</keyword>
<keyword id="KW-0862">Zinc</keyword>
<organism>
    <name type="scientific">Brucella suis biovar 1 (strain 1330)</name>
    <dbReference type="NCBI Taxonomy" id="204722"/>
    <lineage>
        <taxon>Bacteria</taxon>
        <taxon>Pseudomonadati</taxon>
        <taxon>Pseudomonadota</taxon>
        <taxon>Alphaproteobacteria</taxon>
        <taxon>Hyphomicrobiales</taxon>
        <taxon>Brucellaceae</taxon>
        <taxon>Brucella/Ochrobactrum group</taxon>
        <taxon>Brucella</taxon>
    </lineage>
</organism>
<gene>
    <name evidence="1" type="primary">aroB</name>
    <name type="ordered locus">BR2028</name>
    <name type="ordered locus">BS1330_I2022</name>
</gene>
<reference key="1">
    <citation type="journal article" date="2002" name="Proc. Natl. Acad. Sci. U.S.A.">
        <title>The Brucella suis genome reveals fundamental similarities between animal and plant pathogens and symbionts.</title>
        <authorList>
            <person name="Paulsen I.T."/>
            <person name="Seshadri R."/>
            <person name="Nelson K.E."/>
            <person name="Eisen J.A."/>
            <person name="Heidelberg J.F."/>
            <person name="Read T.D."/>
            <person name="Dodson R.J."/>
            <person name="Umayam L.A."/>
            <person name="Brinkac L.M."/>
            <person name="Beanan M.J."/>
            <person name="Daugherty S.C."/>
            <person name="DeBoy R.T."/>
            <person name="Durkin A.S."/>
            <person name="Kolonay J.F."/>
            <person name="Madupu R."/>
            <person name="Nelson W.C."/>
            <person name="Ayodeji B."/>
            <person name="Kraul M."/>
            <person name="Shetty J."/>
            <person name="Malek J.A."/>
            <person name="Van Aken S.E."/>
            <person name="Riedmuller S."/>
            <person name="Tettelin H."/>
            <person name="Gill S.R."/>
            <person name="White O."/>
            <person name="Salzberg S.L."/>
            <person name="Hoover D.L."/>
            <person name="Lindler L.E."/>
            <person name="Halling S.M."/>
            <person name="Boyle S.M."/>
            <person name="Fraser C.M."/>
        </authorList>
    </citation>
    <scope>NUCLEOTIDE SEQUENCE [LARGE SCALE GENOMIC DNA]</scope>
    <source>
        <strain>1330</strain>
    </source>
</reference>
<reference key="2">
    <citation type="journal article" date="2011" name="J. Bacteriol.">
        <title>Revised genome sequence of Brucella suis 1330.</title>
        <authorList>
            <person name="Tae H."/>
            <person name="Shallom S."/>
            <person name="Settlage R."/>
            <person name="Preston D."/>
            <person name="Adams L.G."/>
            <person name="Garner H.R."/>
        </authorList>
    </citation>
    <scope>NUCLEOTIDE SEQUENCE [LARGE SCALE GENOMIC DNA]</scope>
    <source>
        <strain>1330</strain>
    </source>
</reference>
<dbReference type="EC" id="4.2.3.4" evidence="1"/>
<dbReference type="EMBL" id="AE014291">
    <property type="protein sequence ID" value="AAN30918.1"/>
    <property type="molecule type" value="Genomic_DNA"/>
</dbReference>
<dbReference type="EMBL" id="CP002997">
    <property type="protein sequence ID" value="AEM19335.1"/>
    <property type="molecule type" value="Genomic_DNA"/>
</dbReference>
<dbReference type="RefSeq" id="WP_004684507.1">
    <property type="nucleotide sequence ID" value="NZ_KN046804.1"/>
</dbReference>
<dbReference type="SMR" id="P63616"/>
<dbReference type="GeneID" id="97534707"/>
<dbReference type="KEGG" id="bms:BR2028"/>
<dbReference type="KEGG" id="bsi:BS1330_I2022"/>
<dbReference type="PATRIC" id="fig|204722.21.peg.3572"/>
<dbReference type="HOGENOM" id="CLU_001201_0_2_5"/>
<dbReference type="PhylomeDB" id="P63616"/>
<dbReference type="UniPathway" id="UPA00053">
    <property type="reaction ID" value="UER00085"/>
</dbReference>
<dbReference type="Proteomes" id="UP000007104">
    <property type="component" value="Chromosome I"/>
</dbReference>
<dbReference type="GO" id="GO:0005737">
    <property type="term" value="C:cytoplasm"/>
    <property type="evidence" value="ECO:0007669"/>
    <property type="project" value="UniProtKB-SubCell"/>
</dbReference>
<dbReference type="GO" id="GO:0003856">
    <property type="term" value="F:3-dehydroquinate synthase activity"/>
    <property type="evidence" value="ECO:0007669"/>
    <property type="project" value="UniProtKB-UniRule"/>
</dbReference>
<dbReference type="GO" id="GO:0046872">
    <property type="term" value="F:metal ion binding"/>
    <property type="evidence" value="ECO:0007669"/>
    <property type="project" value="UniProtKB-KW"/>
</dbReference>
<dbReference type="GO" id="GO:0000166">
    <property type="term" value="F:nucleotide binding"/>
    <property type="evidence" value="ECO:0007669"/>
    <property type="project" value="UniProtKB-KW"/>
</dbReference>
<dbReference type="GO" id="GO:0008652">
    <property type="term" value="P:amino acid biosynthetic process"/>
    <property type="evidence" value="ECO:0007669"/>
    <property type="project" value="UniProtKB-KW"/>
</dbReference>
<dbReference type="GO" id="GO:0009073">
    <property type="term" value="P:aromatic amino acid family biosynthetic process"/>
    <property type="evidence" value="ECO:0007669"/>
    <property type="project" value="UniProtKB-KW"/>
</dbReference>
<dbReference type="GO" id="GO:0009423">
    <property type="term" value="P:chorismate biosynthetic process"/>
    <property type="evidence" value="ECO:0007669"/>
    <property type="project" value="UniProtKB-UniRule"/>
</dbReference>
<dbReference type="CDD" id="cd08195">
    <property type="entry name" value="DHQS"/>
    <property type="match status" value="1"/>
</dbReference>
<dbReference type="FunFam" id="3.40.50.1970:FF:000007">
    <property type="entry name" value="Pentafunctional AROM polypeptide"/>
    <property type="match status" value="1"/>
</dbReference>
<dbReference type="Gene3D" id="3.40.50.1970">
    <property type="match status" value="1"/>
</dbReference>
<dbReference type="Gene3D" id="1.20.1090.10">
    <property type="entry name" value="Dehydroquinate synthase-like - alpha domain"/>
    <property type="match status" value="1"/>
</dbReference>
<dbReference type="HAMAP" id="MF_00110">
    <property type="entry name" value="DHQ_synthase"/>
    <property type="match status" value="1"/>
</dbReference>
<dbReference type="InterPro" id="IPR050071">
    <property type="entry name" value="Dehydroquinate_synthase"/>
</dbReference>
<dbReference type="InterPro" id="IPR016037">
    <property type="entry name" value="DHQ_synth_AroB"/>
</dbReference>
<dbReference type="InterPro" id="IPR030963">
    <property type="entry name" value="DHQ_synth_fam"/>
</dbReference>
<dbReference type="InterPro" id="IPR030960">
    <property type="entry name" value="DHQS/DOIS_N"/>
</dbReference>
<dbReference type="InterPro" id="IPR056179">
    <property type="entry name" value="DHQS_C"/>
</dbReference>
<dbReference type="NCBIfam" id="TIGR01357">
    <property type="entry name" value="aroB"/>
    <property type="match status" value="1"/>
</dbReference>
<dbReference type="PANTHER" id="PTHR43622">
    <property type="entry name" value="3-DEHYDROQUINATE SYNTHASE"/>
    <property type="match status" value="1"/>
</dbReference>
<dbReference type="PANTHER" id="PTHR43622:SF7">
    <property type="entry name" value="3-DEHYDROQUINATE SYNTHASE, CHLOROPLASTIC"/>
    <property type="match status" value="1"/>
</dbReference>
<dbReference type="Pfam" id="PF01761">
    <property type="entry name" value="DHQ_synthase"/>
    <property type="match status" value="1"/>
</dbReference>
<dbReference type="Pfam" id="PF24621">
    <property type="entry name" value="DHQS_C"/>
    <property type="match status" value="1"/>
</dbReference>
<dbReference type="PIRSF" id="PIRSF001455">
    <property type="entry name" value="DHQ_synth"/>
    <property type="match status" value="1"/>
</dbReference>
<dbReference type="SUPFAM" id="SSF56796">
    <property type="entry name" value="Dehydroquinate synthase-like"/>
    <property type="match status" value="1"/>
</dbReference>
<comment type="function">
    <text evidence="1">Catalyzes the conversion of 3-deoxy-D-arabino-heptulosonate 7-phosphate (DAHP) to dehydroquinate (DHQ).</text>
</comment>
<comment type="catalytic activity">
    <reaction evidence="1">
        <text>7-phospho-2-dehydro-3-deoxy-D-arabino-heptonate = 3-dehydroquinate + phosphate</text>
        <dbReference type="Rhea" id="RHEA:21968"/>
        <dbReference type="ChEBI" id="CHEBI:32364"/>
        <dbReference type="ChEBI" id="CHEBI:43474"/>
        <dbReference type="ChEBI" id="CHEBI:58394"/>
        <dbReference type="EC" id="4.2.3.4"/>
    </reaction>
</comment>
<comment type="cofactor">
    <cofactor evidence="1">
        <name>NAD(+)</name>
        <dbReference type="ChEBI" id="CHEBI:57540"/>
    </cofactor>
</comment>
<comment type="cofactor">
    <cofactor evidence="1">
        <name>Co(2+)</name>
        <dbReference type="ChEBI" id="CHEBI:48828"/>
    </cofactor>
    <cofactor evidence="1">
        <name>Zn(2+)</name>
        <dbReference type="ChEBI" id="CHEBI:29105"/>
    </cofactor>
    <text evidence="1">Binds 1 divalent metal cation per subunit. Can use either Co(2+) or Zn(2+).</text>
</comment>
<comment type="pathway">
    <text evidence="1">Metabolic intermediate biosynthesis; chorismate biosynthesis; chorismate from D-erythrose 4-phosphate and phosphoenolpyruvate: step 2/7.</text>
</comment>
<comment type="subcellular location">
    <subcellularLocation>
        <location evidence="1">Cytoplasm</location>
    </subcellularLocation>
</comment>
<comment type="similarity">
    <text evidence="1">Belongs to the sugar phosphate cyclases superfamily. Dehydroquinate synthase family.</text>
</comment>
<name>AROB_BRUSU</name>
<evidence type="ECO:0000255" key="1">
    <source>
        <dbReference type="HAMAP-Rule" id="MF_00110"/>
    </source>
</evidence>
<sequence length="378" mass="39839">MNAPTTVADSVTVPVSLGDRSYDILIGKGLVERAGEEVAKRLKGVRVAIVTDENVAAVHLERLQASFARAGIDSTPVIVAPGEKSKSFATLETVTNAILAAKLERGDAVVALGGGVVGDLSGFVAGIVRRGMNFVQMPTSLLAQVDSSVGGKTGINTAHGKNLVGVFNQPQLVLADTQVLDTLSPREFRAGYAEVAKYGLIDRPDFFAWLEANWQEVFSGGAARTKAIAESCRSKAAVVARDERETGDRALLNLGHTFGHALESATGYDSSRLVHGEGVAIGMALAYRFSARMNLAGIEAAERVEAHLKAVGLPVSLAEVPGGLPPAEKLMDYIAQDKKVTRGTLTFILTHGIGQSFIAKDVPPAAVLEFLKERLAIA</sequence>
<proteinExistence type="inferred from homology"/>
<feature type="chain" id="PRO_0000140716" description="3-dehydroquinate synthase">
    <location>
        <begin position="1"/>
        <end position="378"/>
    </location>
</feature>
<feature type="binding site" evidence="1">
    <location>
        <begin position="115"/>
        <end position="119"/>
    </location>
    <ligand>
        <name>NAD(+)</name>
        <dbReference type="ChEBI" id="CHEBI:57540"/>
    </ligand>
</feature>
<feature type="binding site" evidence="1">
    <location>
        <begin position="139"/>
        <end position="140"/>
    </location>
    <ligand>
        <name>NAD(+)</name>
        <dbReference type="ChEBI" id="CHEBI:57540"/>
    </ligand>
</feature>
<feature type="binding site" evidence="1">
    <location>
        <position position="152"/>
    </location>
    <ligand>
        <name>NAD(+)</name>
        <dbReference type="ChEBI" id="CHEBI:57540"/>
    </ligand>
</feature>
<feature type="binding site" evidence="1">
    <location>
        <position position="161"/>
    </location>
    <ligand>
        <name>NAD(+)</name>
        <dbReference type="ChEBI" id="CHEBI:57540"/>
    </ligand>
</feature>
<feature type="binding site" evidence="1">
    <location>
        <position position="194"/>
    </location>
    <ligand>
        <name>Zn(2+)</name>
        <dbReference type="ChEBI" id="CHEBI:29105"/>
    </ligand>
</feature>
<feature type="binding site" evidence="1">
    <location>
        <position position="256"/>
    </location>
    <ligand>
        <name>Zn(2+)</name>
        <dbReference type="ChEBI" id="CHEBI:29105"/>
    </ligand>
</feature>
<feature type="binding site" evidence="1">
    <location>
        <position position="275"/>
    </location>
    <ligand>
        <name>Zn(2+)</name>
        <dbReference type="ChEBI" id="CHEBI:29105"/>
    </ligand>
</feature>
<protein>
    <recommendedName>
        <fullName evidence="1">3-dehydroquinate synthase</fullName>
        <shortName evidence="1">DHQS</shortName>
        <ecNumber evidence="1">4.2.3.4</ecNumber>
    </recommendedName>
</protein>
<accession>P63616</accession>
<accession>G0K8P8</accession>
<accession>Q8YJN9</accession>